<sequence>MTLKLAVLRQIFQGSKGWHLWQHWRAFYSSSASGNGKLCCQTGTTDKNTHATRVVDLSYDLYDGSAPGPPLVLLHGLFGSKSNFQSIARALVRKTGRKVLTLDARNHGCSPHDDIMTYPAMSADVCQILHKLQITSCVLIGHSMGGKTAMTVALQEPKLVERFVSVDISPAATVPQTGFPHYIAAMQKVHLEGKIPRSTARRLAEEQLSSTVKEASIRQFLLTNLVQENGTFKWRVNLEVISQHLQDLLDFPEFQEPYPGPALFLGGANSPYISSENYPEIERLFPCANVEYIFGAGHWVHADKTHDFLNSICNFVESA</sequence>
<organism>
    <name type="scientific">Xenopus tropicalis</name>
    <name type="common">Western clawed frog</name>
    <name type="synonym">Silurana tropicalis</name>
    <dbReference type="NCBI Taxonomy" id="8364"/>
    <lineage>
        <taxon>Eukaryota</taxon>
        <taxon>Metazoa</taxon>
        <taxon>Chordata</taxon>
        <taxon>Craniata</taxon>
        <taxon>Vertebrata</taxon>
        <taxon>Euteleostomi</taxon>
        <taxon>Amphibia</taxon>
        <taxon>Batrachia</taxon>
        <taxon>Anura</taxon>
        <taxon>Pipoidea</taxon>
        <taxon>Pipidae</taxon>
        <taxon>Xenopodinae</taxon>
        <taxon>Xenopus</taxon>
        <taxon>Silurana</taxon>
    </lineage>
</organism>
<name>ABHDB_XENTR</name>
<feature type="transit peptide" description="Mitochondrion" evidence="4">
    <location>
        <begin position="1"/>
        <end position="28"/>
    </location>
</feature>
<feature type="chain" id="PRO_0000281007" description="sn-1-specific diacylglycerol lipase ABHD11">
    <location>
        <begin position="29"/>
        <end position="319"/>
    </location>
</feature>
<feature type="domain" description="AB hydrolase-1" evidence="4">
    <location>
        <begin position="69"/>
        <end position="304"/>
    </location>
</feature>
<feature type="active site" description="Charge relay system" evidence="1">
    <location>
        <position position="143"/>
    </location>
</feature>
<feature type="active site" description="Charge relay system" evidence="1">
    <location>
        <position position="239"/>
    </location>
</feature>
<feature type="active site" description="Charge relay system" evidence="1">
    <location>
        <position position="298"/>
    </location>
</feature>
<comment type="function">
    <text evidence="2 3">Catalyzes the hydrolysis of diacylglycerol in vitro and may function as a key regulator in lipid metabolism, namely by regulating the intracellular levels of diacylglycerol (By similarity). 1,2-diacyl-sn-glycerols are the preferred substrate over 1,3-diacyl-sn-glycerols. The enzyme hydrolyzes stearate in preference to palmitate from the sn-1 position of 1,2-diacyl-sn-glycerols (By similarity).</text>
</comment>
<comment type="catalytic activity">
    <reaction evidence="3">
        <text>1-octadecanoyl-2-(5Z,8Z,11Z,14Z-eicosatetraenoyl)-sn-glycerol + H2O = 2-(5Z,8Z,11Z,14Z-eicosatetraenoyl)-glycerol + octadecanoate + H(+)</text>
        <dbReference type="Rhea" id="RHEA:38507"/>
        <dbReference type="ChEBI" id="CHEBI:15377"/>
        <dbReference type="ChEBI" id="CHEBI:15378"/>
        <dbReference type="ChEBI" id="CHEBI:25629"/>
        <dbReference type="ChEBI" id="CHEBI:52392"/>
        <dbReference type="ChEBI" id="CHEBI:75728"/>
    </reaction>
</comment>
<comment type="catalytic activity">
    <reaction evidence="3">
        <text>a 1,2-diacyl-sn-glycerol + H2O = a 2-acylglycerol + a fatty acid + H(+)</text>
        <dbReference type="Rhea" id="RHEA:33275"/>
        <dbReference type="ChEBI" id="CHEBI:15377"/>
        <dbReference type="ChEBI" id="CHEBI:15378"/>
        <dbReference type="ChEBI" id="CHEBI:17389"/>
        <dbReference type="ChEBI" id="CHEBI:17815"/>
        <dbReference type="ChEBI" id="CHEBI:28868"/>
        <dbReference type="EC" id="3.1.1.116"/>
    </reaction>
</comment>
<comment type="catalytic activity">
    <reaction evidence="2">
        <text>a 1,3-diacyl-sn-glycerol + H2O = a 1-acyl-sn-glycerol + a fatty acid + H(+)</text>
        <dbReference type="Rhea" id="RHEA:38503"/>
        <dbReference type="ChEBI" id="CHEBI:15377"/>
        <dbReference type="ChEBI" id="CHEBI:15378"/>
        <dbReference type="ChEBI" id="CHEBI:28868"/>
        <dbReference type="ChEBI" id="CHEBI:64683"/>
        <dbReference type="ChEBI" id="CHEBI:77272"/>
    </reaction>
</comment>
<comment type="catalytic activity">
    <reaction evidence="2">
        <text>1-octadecanoyl-2-(9Z-octadecenoyl)-sn-glycerol + H2O = 2-(9Z-octadecenoyl)-glycerol + octadecanoate + H(+)</text>
        <dbReference type="Rhea" id="RHEA:77103"/>
        <dbReference type="ChEBI" id="CHEBI:15377"/>
        <dbReference type="ChEBI" id="CHEBI:15378"/>
        <dbReference type="ChEBI" id="CHEBI:25629"/>
        <dbReference type="ChEBI" id="CHEBI:73990"/>
        <dbReference type="ChEBI" id="CHEBI:75468"/>
    </reaction>
</comment>
<comment type="catalytic activity">
    <reaction evidence="2">
        <text>1-octadecanoyl-2-(4Z,7Z,10Z,13Z,16Z,19Z-docosahexaenoyl)-sn-glycerol + H2O = 2-(4Z,7Z,10Z,13Z,16Z,19Z-docosahexaenoyl)-glycerol + octadecanoate + H(+)</text>
        <dbReference type="Rhea" id="RHEA:77107"/>
        <dbReference type="ChEBI" id="CHEBI:15377"/>
        <dbReference type="ChEBI" id="CHEBI:15378"/>
        <dbReference type="ChEBI" id="CHEBI:25629"/>
        <dbReference type="ChEBI" id="CHEBI:77129"/>
        <dbReference type="ChEBI" id="CHEBI:186738"/>
    </reaction>
</comment>
<comment type="catalytic activity">
    <reaction evidence="2">
        <text>1,2-didecanoylglycerol + H2O = decanoylglycerol + decanoate + H(+)</text>
        <dbReference type="Rhea" id="RHEA:48596"/>
        <dbReference type="ChEBI" id="CHEBI:11152"/>
        <dbReference type="ChEBI" id="CHEBI:15377"/>
        <dbReference type="ChEBI" id="CHEBI:15378"/>
        <dbReference type="ChEBI" id="CHEBI:27689"/>
        <dbReference type="ChEBI" id="CHEBI:90605"/>
    </reaction>
</comment>
<comment type="subcellular location">
    <subcellularLocation>
        <location evidence="3">Mitochondrion</location>
    </subcellularLocation>
    <subcellularLocation>
        <location evidence="3">Mitochondrion matrix</location>
    </subcellularLocation>
</comment>
<comment type="PTM">
    <text evidence="2">Phosphorylated.</text>
</comment>
<comment type="similarity">
    <text evidence="5">Belongs to the AB hydrolase superfamily.</text>
</comment>
<comment type="sequence caution" evidence="5">
    <conflict type="erroneous initiation">
        <sequence resource="EMBL-CDS" id="AAI21506"/>
    </conflict>
    <text>Extended N-terminus.</text>
</comment>
<keyword id="KW-0378">Hydrolase</keyword>
<keyword id="KW-0496">Mitochondrion</keyword>
<keyword id="KW-1185">Reference proteome</keyword>
<keyword id="KW-0809">Transit peptide</keyword>
<evidence type="ECO:0000250" key="1"/>
<evidence type="ECO:0000250" key="2">
    <source>
        <dbReference type="UniProtKB" id="Q3SZ73"/>
    </source>
</evidence>
<evidence type="ECO:0000250" key="3">
    <source>
        <dbReference type="UniProtKB" id="Q8NFV4"/>
    </source>
</evidence>
<evidence type="ECO:0000255" key="4"/>
<evidence type="ECO:0000305" key="5"/>
<accession>Q0V9K2</accession>
<protein>
    <recommendedName>
        <fullName evidence="5">sn-1-specific diacylglycerol lipase ABHD11</fullName>
        <ecNumber evidence="3">3.1.1.116</ecNumber>
    </recommendedName>
    <alternativeName>
        <fullName evidence="5">Alpha/beta hydrolase domain-containing protein 11</fullName>
        <shortName evidence="3">Abhydrolase domain-containing protein 11</shortName>
    </alternativeName>
</protein>
<dbReference type="EC" id="3.1.1.116" evidence="3"/>
<dbReference type="EMBL" id="BC121505">
    <property type="protein sequence ID" value="AAI21506.1"/>
    <property type="status" value="ALT_INIT"/>
    <property type="molecule type" value="mRNA"/>
</dbReference>
<dbReference type="RefSeq" id="NP_001122119.2">
    <property type="nucleotide sequence ID" value="NM_001128647.2"/>
</dbReference>
<dbReference type="SMR" id="Q0V9K2"/>
<dbReference type="FunCoup" id="Q0V9K2">
    <property type="interactions" value="832"/>
</dbReference>
<dbReference type="STRING" id="8364.ENSXETP00000029627"/>
<dbReference type="ESTHER" id="xentr-abhdb">
    <property type="family name" value="ABHD11-Acetyl_transferase"/>
</dbReference>
<dbReference type="MEROPS" id="S33.976"/>
<dbReference type="PaxDb" id="8364-ENSXETP00000017026"/>
<dbReference type="GeneID" id="779475"/>
<dbReference type="KEGG" id="xtr:779475"/>
<dbReference type="AGR" id="Xenbase:XB-GENE-952690"/>
<dbReference type="CTD" id="83451"/>
<dbReference type="Xenbase" id="XB-GENE-952690">
    <property type="gene designation" value="abhd11"/>
</dbReference>
<dbReference type="eggNOG" id="KOG2382">
    <property type="taxonomic scope" value="Eukaryota"/>
</dbReference>
<dbReference type="InParanoid" id="Q0V9K2"/>
<dbReference type="OrthoDB" id="8119704at2759"/>
<dbReference type="Proteomes" id="UP000008143">
    <property type="component" value="Chromosome 2"/>
</dbReference>
<dbReference type="GO" id="GO:0005759">
    <property type="term" value="C:mitochondrial matrix"/>
    <property type="evidence" value="ECO:0000250"/>
    <property type="project" value="UniProtKB"/>
</dbReference>
<dbReference type="GO" id="GO:0005739">
    <property type="term" value="C:mitochondrion"/>
    <property type="evidence" value="ECO:0000250"/>
    <property type="project" value="UniProtKB"/>
</dbReference>
<dbReference type="GO" id="GO:0045252">
    <property type="term" value="C:oxoglutarate dehydrogenase complex"/>
    <property type="evidence" value="ECO:0000250"/>
    <property type="project" value="UniProtKB"/>
</dbReference>
<dbReference type="GO" id="GO:0016298">
    <property type="term" value="F:lipase activity"/>
    <property type="evidence" value="ECO:0000250"/>
    <property type="project" value="UniProtKB"/>
</dbReference>
<dbReference type="FunFam" id="3.40.50.1820:FF:000039">
    <property type="entry name" value="Esterase ybfF"/>
    <property type="match status" value="1"/>
</dbReference>
<dbReference type="Gene3D" id="3.40.50.1820">
    <property type="entry name" value="alpha/beta hydrolase"/>
    <property type="match status" value="1"/>
</dbReference>
<dbReference type="InterPro" id="IPR000073">
    <property type="entry name" value="AB_hydrolase_1"/>
</dbReference>
<dbReference type="InterPro" id="IPR029058">
    <property type="entry name" value="AB_hydrolase_fold"/>
</dbReference>
<dbReference type="PANTHER" id="PTHR46118">
    <property type="entry name" value="PROTEIN ABHD11"/>
    <property type="match status" value="1"/>
</dbReference>
<dbReference type="PANTHER" id="PTHR46118:SF4">
    <property type="entry name" value="PROTEIN ABHD11"/>
    <property type="match status" value="1"/>
</dbReference>
<dbReference type="Pfam" id="PF00561">
    <property type="entry name" value="Abhydrolase_1"/>
    <property type="match status" value="1"/>
</dbReference>
<dbReference type="SUPFAM" id="SSF53474">
    <property type="entry name" value="alpha/beta-Hydrolases"/>
    <property type="match status" value="1"/>
</dbReference>
<gene>
    <name evidence="3" type="primary">abhd11</name>
</gene>
<reference key="1">
    <citation type="submission" date="2006-08" db="EMBL/GenBank/DDBJ databases">
        <authorList>
            <consortium name="NIH - Xenopus Gene Collection (XGC) project"/>
        </authorList>
    </citation>
    <scope>NUCLEOTIDE SEQUENCE [LARGE SCALE MRNA]</scope>
    <source>
        <tissue>Testis</tissue>
    </source>
</reference>
<proteinExistence type="evidence at transcript level"/>